<feature type="chain" id="PRO_0000232614" description="Small ribosomal subunit protein uS17">
    <location>
        <begin position="1"/>
        <end position="123"/>
    </location>
</feature>
<evidence type="ECO:0000255" key="1">
    <source>
        <dbReference type="HAMAP-Rule" id="MF_01345"/>
    </source>
</evidence>
<evidence type="ECO:0000305" key="2"/>
<sequence>MEVKNIGIPHVLPPASVCDDPLCPWHGHLKVRLKLLEVTVEKVRMHKAAVVIHEWLHYIRKYNRYERRRKRMRVRVPECIEVKPGDKVIIAETRPLSKTIAWVVIGKKEDVVEWKAKHETLQA</sequence>
<organism>
    <name type="scientific">Pyrobaculum aerophilum (strain ATCC 51768 / DSM 7523 / JCM 9630 / CIP 104966 / NBRC 100827 / IM2)</name>
    <dbReference type="NCBI Taxonomy" id="178306"/>
    <lineage>
        <taxon>Archaea</taxon>
        <taxon>Thermoproteota</taxon>
        <taxon>Thermoprotei</taxon>
        <taxon>Thermoproteales</taxon>
        <taxon>Thermoproteaceae</taxon>
        <taxon>Pyrobaculum</taxon>
    </lineage>
</organism>
<reference key="1">
    <citation type="journal article" date="2002" name="Proc. Natl. Acad. Sci. U.S.A.">
        <title>Genome sequence of the hyperthermophilic crenarchaeon Pyrobaculum aerophilum.</title>
        <authorList>
            <person name="Fitz-Gibbon S.T."/>
            <person name="Ladner H."/>
            <person name="Kim U.-J."/>
            <person name="Stetter K.O."/>
            <person name="Simon M.I."/>
            <person name="Miller J.H."/>
        </authorList>
    </citation>
    <scope>NUCLEOTIDE SEQUENCE [LARGE SCALE GENOMIC DNA]</scope>
    <source>
        <strain>ATCC 51768 / DSM 7523 / JCM 9630 / CIP 104966 / NBRC 100827 / IM2</strain>
    </source>
</reference>
<gene>
    <name evidence="1" type="primary">rps17</name>
    <name type="ordered locus">PAE1730</name>
</gene>
<keyword id="KW-1185">Reference proteome</keyword>
<keyword id="KW-0687">Ribonucleoprotein</keyword>
<keyword id="KW-0689">Ribosomal protein</keyword>
<keyword id="KW-0694">RNA-binding</keyword>
<keyword id="KW-0699">rRNA-binding</keyword>
<proteinExistence type="inferred from homology"/>
<comment type="function">
    <text evidence="1">One of the primary rRNA binding proteins, it binds specifically to the 5'-end of 16S ribosomal RNA.</text>
</comment>
<comment type="subunit">
    <text evidence="1">Part of the 30S ribosomal subunit.</text>
</comment>
<comment type="similarity">
    <text evidence="1">Belongs to the universal ribosomal protein uS17 family.</text>
</comment>
<comment type="sequence caution" evidence="2">
    <conflict type="erroneous initiation">
        <sequence resource="EMBL-CDS" id="AAL63688"/>
    </conflict>
    <text>Extended N-terminus.</text>
</comment>
<name>RS17_PYRAE</name>
<accession>Q8ZWL3</accession>
<protein>
    <recommendedName>
        <fullName evidence="1">Small ribosomal subunit protein uS17</fullName>
    </recommendedName>
    <alternativeName>
        <fullName evidence="2">30S ribosomal protein S17</fullName>
    </alternativeName>
</protein>
<dbReference type="EMBL" id="AE009441">
    <property type="protein sequence ID" value="AAL63688.1"/>
    <property type="status" value="ALT_INIT"/>
    <property type="molecule type" value="Genomic_DNA"/>
</dbReference>
<dbReference type="SMR" id="Q8ZWL3"/>
<dbReference type="FunCoup" id="Q8ZWL3">
    <property type="interactions" value="176"/>
</dbReference>
<dbReference type="STRING" id="178306.PAE1730"/>
<dbReference type="EnsemblBacteria" id="AAL63688">
    <property type="protein sequence ID" value="AAL63688"/>
    <property type="gene ID" value="PAE1730"/>
</dbReference>
<dbReference type="KEGG" id="pai:PAE1730"/>
<dbReference type="PATRIC" id="fig|178306.9.peg.1280"/>
<dbReference type="eggNOG" id="arCOG04096">
    <property type="taxonomic scope" value="Archaea"/>
</dbReference>
<dbReference type="HOGENOM" id="CLU_073626_0_3_2"/>
<dbReference type="InParanoid" id="Q8ZWL3"/>
<dbReference type="Proteomes" id="UP000002439">
    <property type="component" value="Chromosome"/>
</dbReference>
<dbReference type="GO" id="GO:0022627">
    <property type="term" value="C:cytosolic small ribosomal subunit"/>
    <property type="evidence" value="ECO:0000318"/>
    <property type="project" value="GO_Central"/>
</dbReference>
<dbReference type="GO" id="GO:0019843">
    <property type="term" value="F:rRNA binding"/>
    <property type="evidence" value="ECO:0007669"/>
    <property type="project" value="UniProtKB-UniRule"/>
</dbReference>
<dbReference type="GO" id="GO:0003735">
    <property type="term" value="F:structural constituent of ribosome"/>
    <property type="evidence" value="ECO:0000318"/>
    <property type="project" value="GO_Central"/>
</dbReference>
<dbReference type="GO" id="GO:0006412">
    <property type="term" value="P:translation"/>
    <property type="evidence" value="ECO:0007669"/>
    <property type="project" value="UniProtKB-UniRule"/>
</dbReference>
<dbReference type="CDD" id="cd00364">
    <property type="entry name" value="Ribosomal_uS17"/>
    <property type="match status" value="1"/>
</dbReference>
<dbReference type="Gene3D" id="2.40.50.1000">
    <property type="match status" value="1"/>
</dbReference>
<dbReference type="HAMAP" id="MF_01345_A">
    <property type="entry name" value="Ribosomal_uS17_A"/>
    <property type="match status" value="1"/>
</dbReference>
<dbReference type="InterPro" id="IPR012340">
    <property type="entry name" value="NA-bd_OB-fold"/>
</dbReference>
<dbReference type="InterPro" id="IPR000266">
    <property type="entry name" value="Ribosomal_uS17"/>
</dbReference>
<dbReference type="InterPro" id="IPR028333">
    <property type="entry name" value="Ribosomal_uS17_arc/euk"/>
</dbReference>
<dbReference type="InterPro" id="IPR019978">
    <property type="entry name" value="Ribosomal_uS17_archaeal"/>
</dbReference>
<dbReference type="InterPro" id="IPR019979">
    <property type="entry name" value="Ribosomal_uS17_CS"/>
</dbReference>
<dbReference type="NCBIfam" id="NF006345">
    <property type="entry name" value="PRK08572.1"/>
    <property type="match status" value="1"/>
</dbReference>
<dbReference type="NCBIfam" id="TIGR03630">
    <property type="entry name" value="uS17_arch"/>
    <property type="match status" value="1"/>
</dbReference>
<dbReference type="PANTHER" id="PTHR10744">
    <property type="entry name" value="40S RIBOSOMAL PROTEIN S11 FAMILY MEMBER"/>
    <property type="match status" value="1"/>
</dbReference>
<dbReference type="PANTHER" id="PTHR10744:SF9">
    <property type="entry name" value="40S RIBOSOMAL PROTEIN S11-RELATED"/>
    <property type="match status" value="1"/>
</dbReference>
<dbReference type="Pfam" id="PF00366">
    <property type="entry name" value="Ribosomal_S17"/>
    <property type="match status" value="1"/>
</dbReference>
<dbReference type="PRINTS" id="PR00973">
    <property type="entry name" value="RIBOSOMALS17"/>
</dbReference>
<dbReference type="SUPFAM" id="SSF50249">
    <property type="entry name" value="Nucleic acid-binding proteins"/>
    <property type="match status" value="1"/>
</dbReference>
<dbReference type="PROSITE" id="PS00056">
    <property type="entry name" value="RIBOSOMAL_S17"/>
    <property type="match status" value="1"/>
</dbReference>